<evidence type="ECO:0000250" key="1">
    <source>
        <dbReference type="UniProtKB" id="A0ST45"/>
    </source>
</evidence>
<evidence type="ECO:0000250" key="2">
    <source>
        <dbReference type="UniProtKB" id="Q0UHZ9"/>
    </source>
</evidence>
<evidence type="ECO:0000303" key="3">
    <source>
    </source>
</evidence>
<evidence type="ECO:0000303" key="4">
    <source>
    </source>
</evidence>
<evidence type="ECO:0000305" key="5"/>
<accession>A0A2G5ICC7</accession>
<gene>
    <name evidence="4" type="primary">CTB7</name>
    <name type="ORF">CB0940_00836</name>
</gene>
<protein>
    <recommendedName>
        <fullName evidence="4">Monooxygenase CTB7</fullName>
        <ecNumber evidence="1">1.-.-.-</ecNumber>
    </recommendedName>
    <alternativeName>
        <fullName evidence="4">Cercosporin toxin biosynthesis cluster protein 7</fullName>
    </alternativeName>
</protein>
<organism>
    <name type="scientific">Cercospora beticola</name>
    <name type="common">Sugarbeet leaf spot fungus</name>
    <dbReference type="NCBI Taxonomy" id="122368"/>
    <lineage>
        <taxon>Eukaryota</taxon>
        <taxon>Fungi</taxon>
        <taxon>Dikarya</taxon>
        <taxon>Ascomycota</taxon>
        <taxon>Pezizomycotina</taxon>
        <taxon>Dothideomycetes</taxon>
        <taxon>Dothideomycetidae</taxon>
        <taxon>Mycosphaerellales</taxon>
        <taxon>Mycosphaerellaceae</taxon>
        <taxon>Cercospora</taxon>
    </lineage>
</organism>
<feature type="chain" id="PRO_0000449871" description="Monooxygenase CTB7">
    <location>
        <begin position="1"/>
        <end position="419"/>
    </location>
</feature>
<dbReference type="EC" id="1.-.-.-" evidence="1"/>
<dbReference type="EMBL" id="LKMD01000100">
    <property type="protein sequence ID" value="PIB02400.1"/>
    <property type="molecule type" value="Genomic_DNA"/>
</dbReference>
<dbReference type="RefSeq" id="XP_023460060.1">
    <property type="nucleotide sequence ID" value="XM_023593478.2"/>
</dbReference>
<dbReference type="SMR" id="A0A2G5ICC7"/>
<dbReference type="GeneID" id="35424648"/>
<dbReference type="OrthoDB" id="655030at2759"/>
<dbReference type="Proteomes" id="UP000230605">
    <property type="component" value="Chromosome 1"/>
</dbReference>
<dbReference type="GO" id="GO:0071949">
    <property type="term" value="F:FAD binding"/>
    <property type="evidence" value="ECO:0007669"/>
    <property type="project" value="InterPro"/>
</dbReference>
<dbReference type="GO" id="GO:0004497">
    <property type="term" value="F:monooxygenase activity"/>
    <property type="evidence" value="ECO:0007669"/>
    <property type="project" value="UniProtKB-KW"/>
</dbReference>
<dbReference type="Gene3D" id="3.30.9.10">
    <property type="entry name" value="D-Amino Acid Oxidase, subunit A, domain 2"/>
    <property type="match status" value="1"/>
</dbReference>
<dbReference type="Gene3D" id="3.50.50.60">
    <property type="entry name" value="FAD/NAD(P)-binding domain"/>
    <property type="match status" value="1"/>
</dbReference>
<dbReference type="InterPro" id="IPR002938">
    <property type="entry name" value="FAD-bd"/>
</dbReference>
<dbReference type="InterPro" id="IPR036188">
    <property type="entry name" value="FAD/NAD-bd_sf"/>
</dbReference>
<dbReference type="InterPro" id="IPR051704">
    <property type="entry name" value="FAD_aromatic-hydroxylase"/>
</dbReference>
<dbReference type="PANTHER" id="PTHR46865:SF2">
    <property type="entry name" value="MONOOXYGENASE"/>
    <property type="match status" value="1"/>
</dbReference>
<dbReference type="PANTHER" id="PTHR46865">
    <property type="entry name" value="OXIDOREDUCTASE-RELATED"/>
    <property type="match status" value="1"/>
</dbReference>
<dbReference type="Pfam" id="PF01494">
    <property type="entry name" value="FAD_binding_3"/>
    <property type="match status" value="1"/>
</dbReference>
<dbReference type="PRINTS" id="PR00420">
    <property type="entry name" value="RNGMNOXGNASE"/>
</dbReference>
<dbReference type="SUPFAM" id="SSF51905">
    <property type="entry name" value="FAD/NAD(P)-binding domain"/>
    <property type="match status" value="1"/>
</dbReference>
<name>CTB7_CERBT</name>
<proteinExistence type="inferred from homology"/>
<sequence length="419" mass="45616">MASSNRRVLVNGGGPAGAVTAFWLAKGGFEVVVTERSMSRPYGQGVDVTGRASDIIKKMGLEQRIRDSTTGEAGLTVVDDQGEDVAPPLGTAPIEGGTASVTQEIEIMRRDLTKIFVDAAEALPNVTFRYGCTVDEVQQHEKSITAVLSDTGKPEDFTAIIGADGLGSAIRKLTFDPEINRRSVSPTNTYVAFFSIPGDPKYDTPVGKLQHANKGRGILVRPIDKKGTQRSCYLMSQSDSQELAQVARTGSQEDQKALLDNRFREFTGPLGKRAVEGMHSADDFYFTRIVQIKLDSWHSGRAALVGDAGYSPSPLTGQGTTLAIIGAYVLAGEMAKSPDDLERAFTSYYAILNKFVSESQEIPFGGQAPKLILPQSDWGIWLLRTFYKIISWTGIWRLLNFGNETVKVELPEYDFGGLD</sequence>
<comment type="function">
    <text evidence="1 2 3">Monooxygenase; part of the gene cluster that mediates the biosynthesis of cercosporin, a light-activated, non-host-selective toxin (By similarity). The perylenequinone chromophore of cercosporin absorbs light energy to attain an electronically-activated triplet state and produces active oxygen species such as the hydroxyl radical, superoxide, hydrogen peroxide or singlet oxygen upon reaction with oxygen molecules (PubMed:11701851). These reactive oxygen species cause damage to various cellular components including lipids, proteins and nucleic acids (PubMed:11701851). The first step of cercosporin biosynthesis is performed by the polyketide synthase CTB1 which catalyzes the formation of nor-toralactone (By similarity). The starter unit acyltransferase (SAT) domain of CTB1 initiates polyketide extension by the selective utilization of acetyl-CoA, which is elongated to the heptaketide in the beta-ketoacyl synthase (KS) domain by successive condensations with six malonyl units introduced by the malonyl acyltransferase (MAT) domain. The product template (PT) domain catalyzes C4-C9 and C2-C11 aldol cyclizations and dehydrations to a trihydroxynaphthalene, which is thought to be delivered to the thioesterase (TE) domain for product release (By similarity). The bifunctional enzyme CTB3 then methylates nor-toralactone to toralactone before conducting an unusual oxidative aromatic ring opening (By similarity). The O-methyltransferase CTB2 further methylates the nascent OH-6 of the CBT3 product, blocking further oxidation at this site before the reductase CTB6 reduces the 2-oxopropyl ketone at position C7, giving naphthalene (By similarity). The FAD-dependent monooxygenase CTB5 in concert with the multicopper oxidase CTB12 are responsible for homodimerization of naphthalene with CTB7 installing the dioxepine moiety, finally producing cercosporin (By similarity). The fasciclin domain-containing protein CTB11 might act with CTB5 and CTB12 whereas the roles of CTB9 and CTB10 have still to be elucidated (By similarity).</text>
</comment>
<comment type="pathway">
    <text evidence="1">Mycotoxin biosynthesis.</text>
</comment>
<comment type="similarity">
    <text evidence="5">Belongs to the aromatic-ring hydroxylase family. KMO subfamily.</text>
</comment>
<keyword id="KW-0274">FAD</keyword>
<keyword id="KW-0285">Flavoprotein</keyword>
<keyword id="KW-0503">Monooxygenase</keyword>
<keyword id="KW-0560">Oxidoreductase</keyword>
<reference key="1">
    <citation type="journal article" date="2018" name="Proc. Natl. Acad. Sci. U.S.A.">
        <title>Gene cluster conservation provides insight into cercosporin biosynthesis and extends production to the genus Colletotrichum.</title>
        <authorList>
            <person name="de Jonge R."/>
            <person name="Ebert M.K."/>
            <person name="Huitt-Roehl C.R."/>
            <person name="Pal P."/>
            <person name="Suttle J.C."/>
            <person name="Spanner R.E."/>
            <person name="Neubauer J.D."/>
            <person name="Jurick W.M. II"/>
            <person name="Stott K.A."/>
            <person name="Secor G.A."/>
            <person name="Thomma B.P.H.J."/>
            <person name="Van de Peer Y."/>
            <person name="Townsend C.A."/>
            <person name="Bolton M.D."/>
        </authorList>
    </citation>
    <scope>NUCLEOTIDE SEQUENCE [LARGE SCALE GENOMIC DNA]</scope>
    <scope>FUNCTION</scope>
    <scope>PATHWAY</scope>
    <source>
        <strain>09-40</strain>
    </source>
</reference>
<reference key="2">
    <citation type="journal article" date="2000" name="Annu. Rev. Phytopathol.">
        <title>The photoactivated cercospora toxin cercosporin: contributions to plant disease and fundamental biology.</title>
        <authorList>
            <person name="Daub M.E."/>
            <person name="Ehrenshaft M."/>
        </authorList>
    </citation>
    <scope>REVIEW ON CERCOSPORIN</scope>
</reference>